<name>LOC1_ASPTN</name>
<gene>
    <name type="primary">loc1</name>
    <name type="ORF">ATEG_06986</name>
</gene>
<sequence length="188" mass="20402">MAPTKGSAKGKADSKKSNPLASASKVSKKKAAKRPPPQEVKSKARTEASQLKKTKKREYSEAELDLPKLNSITPVGVVKPKGKKKGKVFVDDPEGMATILAIVNAEKEGQIESKMMKARQLEEIREAKLKEAEARQAQKKSKLEEAKDSIRNKKKHKGDGNAKSASTTAQTNDSSSKSKGKRKSVSFA</sequence>
<keyword id="KW-0175">Coiled coil</keyword>
<keyword id="KW-0509">mRNA transport</keyword>
<keyword id="KW-0539">Nucleus</keyword>
<keyword id="KW-1185">Reference proteome</keyword>
<keyword id="KW-0690">Ribosome biogenesis</keyword>
<keyword id="KW-0813">Transport</keyword>
<comment type="function">
    <text evidence="1">Required for efficient assembly and nuclear export of the 60S ribosomal subunit.</text>
</comment>
<comment type="subunit">
    <text evidence="1">Component of the 66S pre-ribosomal particle.</text>
</comment>
<comment type="subcellular location">
    <subcellularLocation>
        <location evidence="1">Nucleus</location>
        <location evidence="1">Nucleolus</location>
    </subcellularLocation>
</comment>
<comment type="similarity">
    <text evidence="4">Belongs to the LOC1 family.</text>
</comment>
<comment type="sequence caution" evidence="4">
    <conflict type="erroneous gene model prediction">
        <sequence resource="EMBL-CDS" id="EAU32370"/>
    </conflict>
</comment>
<feature type="chain" id="PRO_0000308788" description="60S ribosomal subunit assembly/export protein loc1">
    <location>
        <begin position="1"/>
        <end position="188"/>
    </location>
</feature>
<feature type="region of interest" description="Disordered" evidence="3">
    <location>
        <begin position="1"/>
        <end position="89"/>
    </location>
</feature>
<feature type="region of interest" description="Disordered" evidence="3">
    <location>
        <begin position="130"/>
        <end position="188"/>
    </location>
</feature>
<feature type="coiled-coil region" evidence="2">
    <location>
        <begin position="103"/>
        <end position="157"/>
    </location>
</feature>
<feature type="compositionally biased region" description="Basic and acidic residues" evidence="3">
    <location>
        <begin position="130"/>
        <end position="151"/>
    </location>
</feature>
<feature type="compositionally biased region" description="Polar residues" evidence="3">
    <location>
        <begin position="163"/>
        <end position="173"/>
    </location>
</feature>
<feature type="compositionally biased region" description="Basic residues" evidence="3">
    <location>
        <begin position="178"/>
        <end position="188"/>
    </location>
</feature>
<protein>
    <recommendedName>
        <fullName>60S ribosomal subunit assembly/export protein loc1</fullName>
    </recommendedName>
</protein>
<organism>
    <name type="scientific">Aspergillus terreus (strain NIH 2624 / FGSC A1156)</name>
    <dbReference type="NCBI Taxonomy" id="341663"/>
    <lineage>
        <taxon>Eukaryota</taxon>
        <taxon>Fungi</taxon>
        <taxon>Dikarya</taxon>
        <taxon>Ascomycota</taxon>
        <taxon>Pezizomycotina</taxon>
        <taxon>Eurotiomycetes</taxon>
        <taxon>Eurotiomycetidae</taxon>
        <taxon>Eurotiales</taxon>
        <taxon>Aspergillaceae</taxon>
        <taxon>Aspergillus</taxon>
        <taxon>Aspergillus subgen. Circumdati</taxon>
    </lineage>
</organism>
<evidence type="ECO:0000250" key="1"/>
<evidence type="ECO:0000255" key="2"/>
<evidence type="ECO:0000256" key="3">
    <source>
        <dbReference type="SAM" id="MobiDB-lite"/>
    </source>
</evidence>
<evidence type="ECO:0000305" key="4"/>
<dbReference type="EMBL" id="CH476603">
    <property type="protein sequence ID" value="EAU32370.1"/>
    <property type="status" value="ALT_SEQ"/>
    <property type="molecule type" value="Genomic_DNA"/>
</dbReference>
<dbReference type="RefSeq" id="XP_001209672.1">
    <property type="nucleotide sequence ID" value="XM_001209672.1"/>
</dbReference>
<dbReference type="SMR" id="Q0CH56"/>
<dbReference type="STRING" id="341663.Q0CH56"/>
<dbReference type="EnsemblFungi" id="EAU32370">
    <property type="protein sequence ID" value="EAU32370"/>
    <property type="gene ID" value="ATEG_06986"/>
</dbReference>
<dbReference type="GeneID" id="4319173"/>
<dbReference type="eggNOG" id="ENOG502RY6R">
    <property type="taxonomic scope" value="Eukaryota"/>
</dbReference>
<dbReference type="OrthoDB" id="1743802at2759"/>
<dbReference type="Proteomes" id="UP000007963">
    <property type="component" value="Unassembled WGS sequence"/>
</dbReference>
<dbReference type="GO" id="GO:0005730">
    <property type="term" value="C:nucleolus"/>
    <property type="evidence" value="ECO:0007669"/>
    <property type="project" value="UniProtKB-SubCell"/>
</dbReference>
<dbReference type="GO" id="GO:0030687">
    <property type="term" value="C:preribosome, large subunit precursor"/>
    <property type="evidence" value="ECO:0007669"/>
    <property type="project" value="TreeGrafter"/>
</dbReference>
<dbReference type="GO" id="GO:0003729">
    <property type="term" value="F:mRNA binding"/>
    <property type="evidence" value="ECO:0007669"/>
    <property type="project" value="InterPro"/>
</dbReference>
<dbReference type="GO" id="GO:0008298">
    <property type="term" value="P:intracellular mRNA localization"/>
    <property type="evidence" value="ECO:0007669"/>
    <property type="project" value="TreeGrafter"/>
</dbReference>
<dbReference type="GO" id="GO:0051028">
    <property type="term" value="P:mRNA transport"/>
    <property type="evidence" value="ECO:0007669"/>
    <property type="project" value="UniProtKB-KW"/>
</dbReference>
<dbReference type="GO" id="GO:0042273">
    <property type="term" value="P:ribosomal large subunit biogenesis"/>
    <property type="evidence" value="ECO:0007669"/>
    <property type="project" value="InterPro"/>
</dbReference>
<dbReference type="InterPro" id="IPR037650">
    <property type="entry name" value="Loc1"/>
</dbReference>
<dbReference type="PANTHER" id="PTHR28028">
    <property type="entry name" value="60S RIBOSOMAL SUBUNIT ASSEMBLY/EXPORT PROTEIN LOC1"/>
    <property type="match status" value="1"/>
</dbReference>
<dbReference type="PANTHER" id="PTHR28028:SF1">
    <property type="entry name" value="60S RIBOSOMAL SUBUNIT ASSEMBLY_EXPORT PROTEIN LOC1"/>
    <property type="match status" value="1"/>
</dbReference>
<accession>Q0CH56</accession>
<proteinExistence type="inferred from homology"/>
<reference key="1">
    <citation type="submission" date="2005-09" db="EMBL/GenBank/DDBJ databases">
        <title>Annotation of the Aspergillus terreus NIH2624 genome.</title>
        <authorList>
            <person name="Birren B.W."/>
            <person name="Lander E.S."/>
            <person name="Galagan J.E."/>
            <person name="Nusbaum C."/>
            <person name="Devon K."/>
            <person name="Henn M."/>
            <person name="Ma L.-J."/>
            <person name="Jaffe D.B."/>
            <person name="Butler J."/>
            <person name="Alvarez P."/>
            <person name="Gnerre S."/>
            <person name="Grabherr M."/>
            <person name="Kleber M."/>
            <person name="Mauceli E.W."/>
            <person name="Brockman W."/>
            <person name="Rounsley S."/>
            <person name="Young S.K."/>
            <person name="LaButti K."/>
            <person name="Pushparaj V."/>
            <person name="DeCaprio D."/>
            <person name="Crawford M."/>
            <person name="Koehrsen M."/>
            <person name="Engels R."/>
            <person name="Montgomery P."/>
            <person name="Pearson M."/>
            <person name="Howarth C."/>
            <person name="Larson L."/>
            <person name="Luoma S."/>
            <person name="White J."/>
            <person name="Alvarado L."/>
            <person name="Kodira C.D."/>
            <person name="Zeng Q."/>
            <person name="Oleary S."/>
            <person name="Yandava C."/>
            <person name="Denning D.W."/>
            <person name="Nierman W.C."/>
            <person name="Milne T."/>
            <person name="Madden K."/>
        </authorList>
    </citation>
    <scope>NUCLEOTIDE SEQUENCE [LARGE SCALE GENOMIC DNA]</scope>
    <source>
        <strain>NIH 2624 / FGSC A1156</strain>
    </source>
</reference>